<dbReference type="EMBL" id="Y09615">
    <property type="protein sequence ID" value="CAA70830.1"/>
    <property type="molecule type" value="mRNA"/>
</dbReference>
<dbReference type="EMBL" id="AK222730">
    <property type="protein sequence ID" value="BAD96450.1"/>
    <property type="molecule type" value="mRNA"/>
</dbReference>
<dbReference type="EMBL" id="AC003086">
    <property type="protein sequence ID" value="AAB83941.1"/>
    <property type="molecule type" value="Genomic_DNA"/>
</dbReference>
<dbReference type="EMBL" id="CH236949">
    <property type="protein sequence ID" value="EAL24159.1"/>
    <property type="molecule type" value="Genomic_DNA"/>
</dbReference>
<dbReference type="EMBL" id="CH471091">
    <property type="protein sequence ID" value="EAW76869.1"/>
    <property type="molecule type" value="Genomic_DNA"/>
</dbReference>
<dbReference type="EMBL" id="BC000965">
    <property type="protein sequence ID" value="AAH00965.1"/>
    <property type="molecule type" value="mRNA"/>
</dbReference>
<dbReference type="EMBL" id="BC108648">
    <property type="protein sequence ID" value="AAI08649.1"/>
    <property type="molecule type" value="mRNA"/>
</dbReference>
<dbReference type="EMBL" id="BC130389">
    <property type="protein sequence ID" value="AAI30390.1"/>
    <property type="molecule type" value="mRNA"/>
</dbReference>
<dbReference type="EMBL" id="BC130391">
    <property type="protein sequence ID" value="AAI30392.1"/>
    <property type="molecule type" value="mRNA"/>
</dbReference>
<dbReference type="CCDS" id="CCDS5621.1"/>
<dbReference type="RefSeq" id="NP_001288063.1">
    <property type="nucleotide sequence ID" value="NM_001301134.1"/>
</dbReference>
<dbReference type="RefSeq" id="NP_001288064.1">
    <property type="nucleotide sequence ID" value="NM_001301135.1"/>
</dbReference>
<dbReference type="RefSeq" id="NP_008911.1">
    <property type="nucleotide sequence ID" value="NM_006980.5"/>
</dbReference>
<dbReference type="RefSeq" id="XP_005250650.1">
    <property type="nucleotide sequence ID" value="XM_005250593.4"/>
</dbReference>
<dbReference type="RefSeq" id="XP_006716189.1">
    <property type="nucleotide sequence ID" value="XM_006716126.4"/>
</dbReference>
<dbReference type="PDB" id="3MVA">
    <property type="method" value="X-ray"/>
    <property type="resolution" value="2.20 A"/>
    <property type="chains" value="O=57-396"/>
</dbReference>
<dbReference type="PDB" id="3MVB">
    <property type="method" value="X-ray"/>
    <property type="resolution" value="2.79 A"/>
    <property type="chains" value="O=57-396"/>
</dbReference>
<dbReference type="PDB" id="3N6S">
    <property type="method" value="X-ray"/>
    <property type="resolution" value="3.10 A"/>
    <property type="chains" value="A=56-399"/>
</dbReference>
<dbReference type="PDB" id="3N7Q">
    <property type="method" value="X-ray"/>
    <property type="resolution" value="2.40 A"/>
    <property type="chains" value="A=99-399"/>
</dbReference>
<dbReference type="PDB" id="5CKY">
    <property type="method" value="X-ray"/>
    <property type="resolution" value="2.62 A"/>
    <property type="chains" value="O=73-396"/>
</dbReference>
<dbReference type="PDB" id="5CO0">
    <property type="method" value="X-ray"/>
    <property type="resolution" value="2.65 A"/>
    <property type="chains" value="O=73-396"/>
</dbReference>
<dbReference type="PDB" id="5CRJ">
    <property type="method" value="X-ray"/>
    <property type="resolution" value="2.59 A"/>
    <property type="chains" value="O=73-396"/>
</dbReference>
<dbReference type="PDB" id="5CRK">
    <property type="method" value="X-ray"/>
    <property type="resolution" value="2.48 A"/>
    <property type="chains" value="O=73-396"/>
</dbReference>
<dbReference type="PDBsum" id="3MVA"/>
<dbReference type="PDBsum" id="3MVB"/>
<dbReference type="PDBsum" id="3N6S"/>
<dbReference type="PDBsum" id="3N7Q"/>
<dbReference type="PDBsum" id="5CKY"/>
<dbReference type="PDBsum" id="5CO0"/>
<dbReference type="PDBsum" id="5CRJ"/>
<dbReference type="PDBsum" id="5CRK"/>
<dbReference type="SMR" id="Q99551"/>
<dbReference type="BioGRID" id="113691">
    <property type="interactions" value="18"/>
</dbReference>
<dbReference type="FunCoup" id="Q99551">
    <property type="interactions" value="1634"/>
</dbReference>
<dbReference type="IntAct" id="Q99551">
    <property type="interactions" value="18"/>
</dbReference>
<dbReference type="MINT" id="Q99551"/>
<dbReference type="STRING" id="9606.ENSP00000248643"/>
<dbReference type="iPTMnet" id="Q99551"/>
<dbReference type="PhosphoSitePlus" id="Q99551"/>
<dbReference type="BioMuta" id="MTERF1"/>
<dbReference type="DMDM" id="12644536"/>
<dbReference type="jPOST" id="Q99551"/>
<dbReference type="MassIVE" id="Q99551"/>
<dbReference type="PaxDb" id="9606-ENSP00000248643"/>
<dbReference type="PeptideAtlas" id="Q99551"/>
<dbReference type="ProteomicsDB" id="78325"/>
<dbReference type="Pumba" id="Q99551"/>
<dbReference type="Antibodypedia" id="29914">
    <property type="antibodies" value="196 antibodies from 26 providers"/>
</dbReference>
<dbReference type="DNASU" id="7978"/>
<dbReference type="Ensembl" id="ENST00000351870.8">
    <property type="protein sequence ID" value="ENSP00000248643.3"/>
    <property type="gene ID" value="ENSG00000127989.14"/>
</dbReference>
<dbReference type="GeneID" id="7978"/>
<dbReference type="KEGG" id="hsa:7978"/>
<dbReference type="MANE-Select" id="ENST00000351870.8">
    <property type="protein sequence ID" value="ENSP00000248643.3"/>
    <property type="RefSeq nucleotide sequence ID" value="NM_006980.5"/>
    <property type="RefSeq protein sequence ID" value="NP_008911.1"/>
</dbReference>
<dbReference type="UCSC" id="uc003ulc.2">
    <property type="organism name" value="human"/>
</dbReference>
<dbReference type="AGR" id="HGNC:21463"/>
<dbReference type="CTD" id="7978"/>
<dbReference type="DisGeNET" id="7978"/>
<dbReference type="GeneCards" id="MTERF1"/>
<dbReference type="HGNC" id="HGNC:21463">
    <property type="gene designation" value="MTERF1"/>
</dbReference>
<dbReference type="HPA" id="ENSG00000127989">
    <property type="expression patterns" value="Low tissue specificity"/>
</dbReference>
<dbReference type="MIM" id="602318">
    <property type="type" value="gene"/>
</dbReference>
<dbReference type="neXtProt" id="NX_Q99551"/>
<dbReference type="OpenTargets" id="ENSG00000127989"/>
<dbReference type="PharmGKB" id="PA142671308"/>
<dbReference type="VEuPathDB" id="HostDB:ENSG00000127989"/>
<dbReference type="eggNOG" id="KOG1267">
    <property type="taxonomic scope" value="Eukaryota"/>
</dbReference>
<dbReference type="GeneTree" id="ENSGT00530000063817"/>
<dbReference type="InParanoid" id="Q99551"/>
<dbReference type="OMA" id="IVSRYPR"/>
<dbReference type="OrthoDB" id="637682at2759"/>
<dbReference type="PAN-GO" id="Q99551">
    <property type="GO annotations" value="3 GO annotations based on evolutionary models"/>
</dbReference>
<dbReference type="PhylomeDB" id="Q99551"/>
<dbReference type="TreeFam" id="TF330821"/>
<dbReference type="PathwayCommons" id="Q99551"/>
<dbReference type="Reactome" id="R-HSA-163316">
    <property type="pathway name" value="Mitochondrial transcription termination"/>
</dbReference>
<dbReference type="Reactome" id="R-HSA-2151201">
    <property type="pathway name" value="Transcriptional activation of mitochondrial biogenesis"/>
</dbReference>
<dbReference type="SignaLink" id="Q99551"/>
<dbReference type="BioGRID-ORCS" id="7978">
    <property type="hits" value="14 hits in 1151 CRISPR screens"/>
</dbReference>
<dbReference type="ChiTaRS" id="MTERF1">
    <property type="organism name" value="human"/>
</dbReference>
<dbReference type="EvolutionaryTrace" id="Q99551"/>
<dbReference type="GeneWiki" id="MTERF"/>
<dbReference type="GenomeRNAi" id="7978"/>
<dbReference type="Pharos" id="Q99551">
    <property type="development level" value="Tbio"/>
</dbReference>
<dbReference type="PRO" id="PR:Q99551"/>
<dbReference type="Proteomes" id="UP000005640">
    <property type="component" value="Chromosome 7"/>
</dbReference>
<dbReference type="RNAct" id="Q99551">
    <property type="molecule type" value="protein"/>
</dbReference>
<dbReference type="Bgee" id="ENSG00000127989">
    <property type="expression patterns" value="Expressed in corpus callosum and 108 other cell types or tissues"/>
</dbReference>
<dbReference type="ExpressionAtlas" id="Q99551">
    <property type="expression patterns" value="baseline and differential"/>
</dbReference>
<dbReference type="GO" id="GO:0005759">
    <property type="term" value="C:mitochondrial matrix"/>
    <property type="evidence" value="ECO:0000318"/>
    <property type="project" value="GO_Central"/>
</dbReference>
<dbReference type="GO" id="GO:0042645">
    <property type="term" value="C:mitochondrial nucleoid"/>
    <property type="evidence" value="ECO:0000314"/>
    <property type="project" value="BHF-UCL"/>
</dbReference>
<dbReference type="GO" id="GO:0005739">
    <property type="term" value="C:mitochondrion"/>
    <property type="evidence" value="ECO:0000314"/>
    <property type="project" value="HPA"/>
</dbReference>
<dbReference type="GO" id="GO:0003690">
    <property type="term" value="F:double-stranded DNA binding"/>
    <property type="evidence" value="ECO:0000314"/>
    <property type="project" value="UniProtKB"/>
</dbReference>
<dbReference type="GO" id="GO:0003676">
    <property type="term" value="F:nucleic acid binding"/>
    <property type="evidence" value="ECO:0000318"/>
    <property type="project" value="GO_Central"/>
</dbReference>
<dbReference type="GO" id="GO:0003723">
    <property type="term" value="F:RNA binding"/>
    <property type="evidence" value="ECO:0007005"/>
    <property type="project" value="UniProtKB"/>
</dbReference>
<dbReference type="GO" id="GO:0032392">
    <property type="term" value="P:DNA geometric change"/>
    <property type="evidence" value="ECO:0000314"/>
    <property type="project" value="UniProtKB"/>
</dbReference>
<dbReference type="GO" id="GO:0006353">
    <property type="term" value="P:DNA-templated transcription termination"/>
    <property type="evidence" value="ECO:0000314"/>
    <property type="project" value="UniProtKB"/>
</dbReference>
<dbReference type="GO" id="GO:0006355">
    <property type="term" value="P:regulation of DNA-templated transcription"/>
    <property type="evidence" value="ECO:0007669"/>
    <property type="project" value="InterPro"/>
</dbReference>
<dbReference type="GO" id="GO:0006393">
    <property type="term" value="P:termination of mitochondrial transcription"/>
    <property type="evidence" value="ECO:0000314"/>
    <property type="project" value="UniProtKB"/>
</dbReference>
<dbReference type="FunFam" id="1.25.70.10:FF:000007">
    <property type="entry name" value="Mitochondrial transcription termination factor 1"/>
    <property type="match status" value="1"/>
</dbReference>
<dbReference type="FunFam" id="1.25.70.10:FF:000003">
    <property type="entry name" value="transcription termination factor 2, mitochondrial"/>
    <property type="match status" value="1"/>
</dbReference>
<dbReference type="Gene3D" id="1.25.70.10">
    <property type="entry name" value="Transcription termination factor 3, mitochondrial"/>
    <property type="match status" value="2"/>
</dbReference>
<dbReference type="InterPro" id="IPR003690">
    <property type="entry name" value="MTERF"/>
</dbReference>
<dbReference type="InterPro" id="IPR038538">
    <property type="entry name" value="MTERF_sf"/>
</dbReference>
<dbReference type="PANTHER" id="PTHR15437:SF2">
    <property type="entry name" value="TRANSCRIPTION TERMINATION FACTOR 1, MITOCHONDRIAL"/>
    <property type="match status" value="1"/>
</dbReference>
<dbReference type="PANTHER" id="PTHR15437">
    <property type="entry name" value="TRANSCRIPTION TERMINATION FACTOR, MITOCHONDRIAL"/>
    <property type="match status" value="1"/>
</dbReference>
<dbReference type="Pfam" id="PF02536">
    <property type="entry name" value="mTERF"/>
    <property type="match status" value="1"/>
</dbReference>
<dbReference type="SMART" id="SM00733">
    <property type="entry name" value="Mterf"/>
    <property type="match status" value="6"/>
</dbReference>
<organism>
    <name type="scientific">Homo sapiens</name>
    <name type="common">Human</name>
    <dbReference type="NCBI Taxonomy" id="9606"/>
    <lineage>
        <taxon>Eukaryota</taxon>
        <taxon>Metazoa</taxon>
        <taxon>Chordata</taxon>
        <taxon>Craniata</taxon>
        <taxon>Vertebrata</taxon>
        <taxon>Euteleostomi</taxon>
        <taxon>Mammalia</taxon>
        <taxon>Eutheria</taxon>
        <taxon>Euarchontoglires</taxon>
        <taxon>Primates</taxon>
        <taxon>Haplorrhini</taxon>
        <taxon>Catarrhini</taxon>
        <taxon>Hominidae</taxon>
        <taxon>Homo</taxon>
    </lineage>
</organism>
<gene>
    <name type="primary">MTERF1</name>
    <name type="synonym">MTERF</name>
</gene>
<name>MTEF1_HUMAN</name>
<protein>
    <recommendedName>
        <fullName>Transcription termination factor 1, mitochondrial</fullName>
    </recommendedName>
    <alternativeName>
        <fullName>Mitochondrial transcription termination factor 1</fullName>
        <shortName>mTERF</shortName>
        <shortName>mTERF1</shortName>
    </alternativeName>
</protein>
<sequence>MQSLSLGQTSISKGLNYLTIMAPGNLWHMRNNFLFGSRCWMTRFSAENIFKSVSFRLFGVKCHNTDSEPLKNEDLLKNLLTMGVDIDMARKRQPGVFHRMITNEQDLKMFLLSKGASKEVIASIISRYPRAITRTPENLSKRWDLWRKIVTSDLEIVNILERSPESFFRSNNNLNLENNIKFLYSVGLTRKCLCRLLTNAPRTFSNSLDLNKQMVEFLQAAGLSLGHNDPADFVRKIIFKNPFILIQSTKRVKANIEFLRSTFNLNSEELLVLICGPGAEILDLSNDYARRSYANIKEKLFSLGCTEEEVQKFVLSYPDVIFLAEKKFNDKIDCLMEENISISQIIENPRVLDSSISTLKSRIKELVNAGCNLSTLNITLLSWSKKRYEAKLKKLSRFA</sequence>
<comment type="function">
    <text evidence="5">Transcription termination factor. Binds to a 28 bp region within the tRNA(Leu(uur)) gene at a position immediately adjacent to and downstream of the 16S rRNA gene; this region comprises a tridecamer sequence critical for directing accurate termination. Binds DNA along the major grove and promotes DNA bending and partial unwinding. Promotes base flipping. Transcription termination activity appears to be polarized with highest specificity for transcripts initiated on the light strand.</text>
</comment>
<comment type="subunit">
    <text evidence="4 5">Monomer.</text>
</comment>
<comment type="interaction">
    <interactant intactId="EBI-2690033">
        <id>Q99551</id>
    </interactant>
    <interactant intactId="EBI-2654581">
        <id>Q5F1R6</id>
        <label>DNAJC21</label>
    </interactant>
    <organismsDiffer>false</organismsDiffer>
    <experiments>2</experiments>
</comment>
<comment type="interaction">
    <interactant intactId="EBI-2690033">
        <id>Q99551</id>
    </interactant>
    <interactant intactId="EBI-11030787">
        <id>Q9NVS9</id>
        <label>PNPO</label>
    </interactant>
    <organismsDiffer>false</organismsDiffer>
    <experiments>3</experiments>
</comment>
<comment type="interaction">
    <interactant intactId="EBI-2690033">
        <id>Q99551</id>
    </interactant>
    <interactant intactId="EBI-10694905">
        <id>Q5BJH2-2</id>
        <label>TMEM128</label>
    </interactant>
    <organismsDiffer>false</organismsDiffer>
    <experiments>3</experiments>
</comment>
<comment type="subcellular location">
    <subcellularLocation>
        <location>Mitochondrion</location>
    </subcellularLocation>
</comment>
<comment type="domain">
    <text evidence="4 5">Contains nine structural repeats of about 35 residues, where each repeat contains three helices. The repeats form a left-handed superhelical assembly with a solenoid structure that wraps itself around DNA.</text>
</comment>
<comment type="PTM">
    <text evidence="2">Phosphoprotein with mostly four phosphate groups. While the DNA-binding activity is unaffected by the phosphorylation state, only the phosphorylated form of the protein is active for termination activity. Functioning seems to be regulated by phosphorylation.</text>
</comment>
<comment type="similarity">
    <text evidence="7">Belongs to the mTERF family.</text>
</comment>
<reference key="1">
    <citation type="journal article" date="1997" name="EMBO J.">
        <title>The human mitochondrial transcription termination factor (mTERF) is a multizipper protein but binds to DNA as a monomer, with evidence pointing to intramolecular leucine zipper interactions.</title>
        <authorList>
            <person name="Fernandez-Silva P."/>
            <person name="Martinez-Azorin F."/>
            <person name="Micol V."/>
            <person name="Attardi G."/>
        </authorList>
    </citation>
    <scope>NUCLEOTIDE SEQUENCE [MRNA]</scope>
    <scope>PROTEIN SEQUENCE OF 91-108; 118-141; 148-181 AND 254-260</scope>
    <scope>MUTAGENESIS</scope>
</reference>
<reference key="2">
    <citation type="journal article" date="2003" name="Science">
        <title>Human chromosome 7: DNA sequence and biology.</title>
        <authorList>
            <person name="Scherer S.W."/>
            <person name="Cheung J."/>
            <person name="MacDonald J.R."/>
            <person name="Osborne L.R."/>
            <person name="Nakabayashi K."/>
            <person name="Herbrick J.-A."/>
            <person name="Carson A.R."/>
            <person name="Parker-Katiraee L."/>
            <person name="Skaug J."/>
            <person name="Khaja R."/>
            <person name="Zhang J."/>
            <person name="Hudek A.K."/>
            <person name="Li M."/>
            <person name="Haddad M."/>
            <person name="Duggan G.E."/>
            <person name="Fernandez B.A."/>
            <person name="Kanematsu E."/>
            <person name="Gentles S."/>
            <person name="Christopoulos C.C."/>
            <person name="Choufani S."/>
            <person name="Kwasnicka D."/>
            <person name="Zheng X.H."/>
            <person name="Lai Z."/>
            <person name="Nusskern D.R."/>
            <person name="Zhang Q."/>
            <person name="Gu Z."/>
            <person name="Lu F."/>
            <person name="Zeesman S."/>
            <person name="Nowaczyk M.J."/>
            <person name="Teshima I."/>
            <person name="Chitayat D."/>
            <person name="Shuman C."/>
            <person name="Weksberg R."/>
            <person name="Zackai E.H."/>
            <person name="Grebe T.A."/>
            <person name="Cox S.R."/>
            <person name="Kirkpatrick S.J."/>
            <person name="Rahman N."/>
            <person name="Friedman J.M."/>
            <person name="Heng H.H.Q."/>
            <person name="Pelicci P.G."/>
            <person name="Lo-Coco F."/>
            <person name="Belloni E."/>
            <person name="Shaffer L.G."/>
            <person name="Pober B."/>
            <person name="Morton C.C."/>
            <person name="Gusella J.F."/>
            <person name="Bruns G.A.P."/>
            <person name="Korf B.R."/>
            <person name="Quade B.J."/>
            <person name="Ligon A.H."/>
            <person name="Ferguson H."/>
            <person name="Higgins A.W."/>
            <person name="Leach N.T."/>
            <person name="Herrick S.R."/>
            <person name="Lemyre E."/>
            <person name="Farra C.G."/>
            <person name="Kim H.-G."/>
            <person name="Summers A.M."/>
            <person name="Gripp K.W."/>
            <person name="Roberts W."/>
            <person name="Szatmari P."/>
            <person name="Winsor E.J.T."/>
            <person name="Grzeschik K.-H."/>
            <person name="Teebi A."/>
            <person name="Minassian B.A."/>
            <person name="Kere J."/>
            <person name="Armengol L."/>
            <person name="Pujana M.A."/>
            <person name="Estivill X."/>
            <person name="Wilson M.D."/>
            <person name="Koop B.F."/>
            <person name="Tosi S."/>
            <person name="Moore G.E."/>
            <person name="Boright A.P."/>
            <person name="Zlotorynski E."/>
            <person name="Kerem B."/>
            <person name="Kroisel P.M."/>
            <person name="Petek E."/>
            <person name="Oscier D.G."/>
            <person name="Mould S.J."/>
            <person name="Doehner H."/>
            <person name="Doehner K."/>
            <person name="Rommens J.M."/>
            <person name="Vincent J.B."/>
            <person name="Venter J.C."/>
            <person name="Li P.W."/>
            <person name="Mural R.J."/>
            <person name="Adams M.D."/>
            <person name="Tsui L.-C."/>
        </authorList>
    </citation>
    <scope>NUCLEOTIDE SEQUENCE [LARGE SCALE GENOMIC DNA]</scope>
</reference>
<reference key="3">
    <citation type="submission" date="2005-09" db="EMBL/GenBank/DDBJ databases">
        <authorList>
            <person name="Mural R.J."/>
            <person name="Istrail S."/>
            <person name="Sutton G.G."/>
            <person name="Florea L."/>
            <person name="Halpern A.L."/>
            <person name="Mobarry C.M."/>
            <person name="Lippert R."/>
            <person name="Walenz B."/>
            <person name="Shatkay H."/>
            <person name="Dew I."/>
            <person name="Miller J.R."/>
            <person name="Flanigan M.J."/>
            <person name="Edwards N.J."/>
            <person name="Bolanos R."/>
            <person name="Fasulo D."/>
            <person name="Halldorsson B.V."/>
            <person name="Hannenhalli S."/>
            <person name="Turner R."/>
            <person name="Yooseph S."/>
            <person name="Lu F."/>
            <person name="Nusskern D.R."/>
            <person name="Shue B.C."/>
            <person name="Zheng X.H."/>
            <person name="Zhong F."/>
            <person name="Delcher A.L."/>
            <person name="Huson D.H."/>
            <person name="Kravitz S.A."/>
            <person name="Mouchard L."/>
            <person name="Reinert K."/>
            <person name="Remington K.A."/>
            <person name="Clark A.G."/>
            <person name="Waterman M.S."/>
            <person name="Eichler E.E."/>
            <person name="Adams M.D."/>
            <person name="Hunkapiller M.W."/>
            <person name="Myers E.W."/>
            <person name="Venter J.C."/>
        </authorList>
    </citation>
    <scope>NUCLEOTIDE SEQUENCE [LARGE SCALE GENOMIC DNA]</scope>
</reference>
<reference key="4">
    <citation type="submission" date="2005-04" db="EMBL/GenBank/DDBJ databases">
        <authorList>
            <person name="Suzuki Y."/>
            <person name="Sugano S."/>
            <person name="Totoki Y."/>
            <person name="Toyoda A."/>
            <person name="Takeda T."/>
            <person name="Sakaki Y."/>
            <person name="Tanaka A."/>
            <person name="Yokoyama S."/>
        </authorList>
    </citation>
    <scope>NUCLEOTIDE SEQUENCE [LARGE SCALE MRNA]</scope>
    <scope>VARIANT THR-294</scope>
    <source>
        <tissue>Colon</tissue>
    </source>
</reference>
<reference key="5">
    <citation type="journal article" date="2003" name="Nature">
        <title>The DNA sequence of human chromosome 7.</title>
        <authorList>
            <person name="Hillier L.W."/>
            <person name="Fulton R.S."/>
            <person name="Fulton L.A."/>
            <person name="Graves T.A."/>
            <person name="Pepin K.H."/>
            <person name="Wagner-McPherson C."/>
            <person name="Layman D."/>
            <person name="Maas J."/>
            <person name="Jaeger S."/>
            <person name="Walker R."/>
            <person name="Wylie K."/>
            <person name="Sekhon M."/>
            <person name="Becker M.C."/>
            <person name="O'Laughlin M.D."/>
            <person name="Schaller M.E."/>
            <person name="Fewell G.A."/>
            <person name="Delehaunty K.D."/>
            <person name="Miner T.L."/>
            <person name="Nash W.E."/>
            <person name="Cordes M."/>
            <person name="Du H."/>
            <person name="Sun H."/>
            <person name="Edwards J."/>
            <person name="Bradshaw-Cordum H."/>
            <person name="Ali J."/>
            <person name="Andrews S."/>
            <person name="Isak A."/>
            <person name="Vanbrunt A."/>
            <person name="Nguyen C."/>
            <person name="Du F."/>
            <person name="Lamar B."/>
            <person name="Courtney L."/>
            <person name="Kalicki J."/>
            <person name="Ozersky P."/>
            <person name="Bielicki L."/>
            <person name="Scott K."/>
            <person name="Holmes A."/>
            <person name="Harkins R."/>
            <person name="Harris A."/>
            <person name="Strong C.M."/>
            <person name="Hou S."/>
            <person name="Tomlinson C."/>
            <person name="Dauphin-Kohlberg S."/>
            <person name="Kozlowicz-Reilly A."/>
            <person name="Leonard S."/>
            <person name="Rohlfing T."/>
            <person name="Rock S.M."/>
            <person name="Tin-Wollam A.-M."/>
            <person name="Abbott A."/>
            <person name="Minx P."/>
            <person name="Maupin R."/>
            <person name="Strowmatt C."/>
            <person name="Latreille P."/>
            <person name="Miller N."/>
            <person name="Johnson D."/>
            <person name="Murray J."/>
            <person name="Woessner J.P."/>
            <person name="Wendl M.C."/>
            <person name="Yang S.-P."/>
            <person name="Schultz B.R."/>
            <person name="Wallis J.W."/>
            <person name="Spieth J."/>
            <person name="Bieri T.A."/>
            <person name="Nelson J.O."/>
            <person name="Berkowicz N."/>
            <person name="Wohldmann P.E."/>
            <person name="Cook L.L."/>
            <person name="Hickenbotham M.T."/>
            <person name="Eldred J."/>
            <person name="Williams D."/>
            <person name="Bedell J.A."/>
            <person name="Mardis E.R."/>
            <person name="Clifton S.W."/>
            <person name="Chissoe S.L."/>
            <person name="Marra M.A."/>
            <person name="Raymond C."/>
            <person name="Haugen E."/>
            <person name="Gillett W."/>
            <person name="Zhou Y."/>
            <person name="James R."/>
            <person name="Phelps K."/>
            <person name="Iadanoto S."/>
            <person name="Bubb K."/>
            <person name="Simms E."/>
            <person name="Levy R."/>
            <person name="Clendenning J."/>
            <person name="Kaul R."/>
            <person name="Kent W.J."/>
            <person name="Furey T.S."/>
            <person name="Baertsch R.A."/>
            <person name="Brent M.R."/>
            <person name="Keibler E."/>
            <person name="Flicek P."/>
            <person name="Bork P."/>
            <person name="Suyama M."/>
            <person name="Bailey J.A."/>
            <person name="Portnoy M.E."/>
            <person name="Torrents D."/>
            <person name="Chinwalla A.T."/>
            <person name="Gish W.R."/>
            <person name="Eddy S.R."/>
            <person name="McPherson J.D."/>
            <person name="Olson M.V."/>
            <person name="Eichler E.E."/>
            <person name="Green E.D."/>
            <person name="Waterston R.H."/>
            <person name="Wilson R.K."/>
        </authorList>
    </citation>
    <scope>NUCLEOTIDE SEQUENCE [LARGE SCALE GENOMIC DNA]</scope>
</reference>
<reference key="6">
    <citation type="journal article" date="2004" name="Genome Res.">
        <title>The status, quality, and expansion of the NIH full-length cDNA project: the Mammalian Gene Collection (MGC).</title>
        <authorList>
            <consortium name="The MGC Project Team"/>
        </authorList>
    </citation>
    <scope>NUCLEOTIDE SEQUENCE [LARGE SCALE MRNA]</scope>
    <scope>VARIANT THR-231</scope>
    <source>
        <tissue>Brain</tissue>
        <tissue>Placenta</tissue>
        <tissue>Uterus</tissue>
    </source>
</reference>
<reference key="7">
    <citation type="journal article" date="2004" name="Nucleic Acids Res.">
        <title>Phosphorylation of rat mitochondrial transcription termination factor (mTERF) is required for transcription termination but not for binding to DNA.</title>
        <authorList>
            <person name="Prieto-Martin A."/>
            <person name="Montoya J."/>
            <person name="Martinez-Azorin F."/>
        </authorList>
    </citation>
    <scope>PHOSPHORYLATION</scope>
</reference>
<reference key="8">
    <citation type="journal article" date="2010" name="Cell">
        <title>Helix unwinding and base flipping enable human MTERF1 to terminate mitochondrial transcription.</title>
        <authorList>
            <person name="Yakubovskaya E."/>
            <person name="Mejia E."/>
            <person name="Byrnes J."/>
            <person name="Hambardjieva E."/>
            <person name="Garcia-Diaz M."/>
        </authorList>
    </citation>
    <scope>X-RAY CRYSTALLOGRAPHY (2.20 ANGSTROMS) OF 57-396 IN COMPLEX WITH DOUBLE-STRANDED DNA</scope>
    <scope>DOMAIN</scope>
    <scope>SUBUNIT</scope>
    <scope>FUNCTION</scope>
    <scope>MUTAGENESIS OF ARG-162; ARG-169; ARG-202; PHE-243; ARG-251; TYR-288; ARG-350 AND ARG-387</scope>
</reference>
<reference key="9">
    <citation type="journal article" date="2010" name="Nat. Struct. Mol. Biol.">
        <title>Human mitochondrial mTERF wraps around DNA through a left-handed superhelical tandem repeat.</title>
        <authorList>
            <person name="Jimenez-Menendez N."/>
            <person name="Fernandez-Millan P."/>
            <person name="Rubio-Cosials A."/>
            <person name="Arnan C."/>
            <person name="Montoya J."/>
            <person name="Jacobs H.T."/>
            <person name="Bernado P."/>
            <person name="Coll M."/>
            <person name="Uson I."/>
            <person name="Sola M."/>
        </authorList>
    </citation>
    <scope>X-RAY CRYSTALLOGRAPHY (2.40 ANGSTROMS) OF 56-399 IN COMPLEX WITH DOUBLE-STRANDED DNA</scope>
    <scope>DOMAIN</scope>
    <scope>SUBUNIT</scope>
</reference>
<accession>Q99551</accession>
<accession>A4D1E3</accession>
<accession>Q32NF8</accession>
<accession>Q53H51</accession>
<accession>Q9BVR7</accession>
<proteinExistence type="evidence at protein level"/>
<feature type="transit peptide" description="Mitochondrion" evidence="1">
    <location>
        <begin position="1"/>
        <end position="57"/>
    </location>
</feature>
<feature type="chain" id="PRO_0000021779" description="Transcription termination factor 1, mitochondrial">
    <location>
        <begin position="58"/>
        <end position="399"/>
    </location>
</feature>
<feature type="region of interest" description="Interaction with DNA">
    <location>
        <begin position="169"/>
        <end position="170"/>
    </location>
</feature>
<feature type="region of interest" description="Interaction with DNA">
    <location>
        <begin position="247"/>
        <end position="251"/>
    </location>
</feature>
<feature type="region of interest" description="Interaction with DNA">
    <location>
        <begin position="324"/>
        <end position="331"/>
    </location>
</feature>
<feature type="region of interest" description="Interaction with DNA">
    <location>
        <begin position="355"/>
        <end position="358"/>
    </location>
</feature>
<feature type="region of interest" description="Interaction with DNA">
    <location>
        <begin position="384"/>
        <end position="391"/>
    </location>
</feature>
<feature type="site" description="Interaction with DNA">
    <location>
        <position position="162"/>
    </location>
</feature>
<feature type="site" description="Interaction with DNA">
    <location>
        <position position="202"/>
    </location>
</feature>
<feature type="site" description="Interaction with DNA">
    <location>
        <position position="243"/>
    </location>
</feature>
<feature type="site" description="Interaction with DNA">
    <location>
        <position position="288"/>
    </location>
</feature>
<feature type="site" description="Interaction with DNA">
    <location>
        <position position="350"/>
    </location>
</feature>
<feature type="sequence variant" id="VAR_053785" description="In dbSNP:rs17856025." evidence="3">
    <original>A</original>
    <variation>T</variation>
    <location>
        <position position="231"/>
    </location>
</feature>
<feature type="sequence variant" id="VAR_024237" description="In dbSNP:rs10266424." evidence="6">
    <original>A</original>
    <variation>T</variation>
    <location>
        <position position="294"/>
    </location>
</feature>
<feature type="mutagenesis site" description="Reduces affinity for cognate DNA; when associated with A-243 and A-288." evidence="5">
    <original>R</original>
    <variation>A</variation>
    <location>
        <position position="162"/>
    </location>
</feature>
<feature type="mutagenesis site" description="Strongly reduces affinity for DNA. Strongly reduces transcription termination." evidence="5">
    <original>R</original>
    <variation>A</variation>
    <location>
        <position position="169"/>
    </location>
</feature>
<feature type="mutagenesis site" description="Strongly reduces affinity for DNA. Strongly reduces transcription termination." evidence="5">
    <original>R</original>
    <variation>A</variation>
    <location>
        <position position="202"/>
    </location>
</feature>
<feature type="mutagenesis site" description="Reduces affinity for cognate DNA; when associated with A-162 and A-288." evidence="5">
    <original>F</original>
    <variation>A</variation>
    <location>
        <position position="243"/>
    </location>
</feature>
<feature type="mutagenesis site" description="Strongly reduces transcription termination." evidence="5">
    <original>R</original>
    <variation>A</variation>
    <location>
        <position position="251"/>
    </location>
</feature>
<feature type="mutagenesis site" description="Reduces affinity for cognate DNA; when associated with A-162 and A-243." evidence="5">
    <original>Y</original>
    <variation>A</variation>
    <location>
        <position position="288"/>
    </location>
</feature>
<feature type="mutagenesis site" description="Reduces transcription termination." evidence="5">
    <original>R</original>
    <variation>A</variation>
    <location>
        <position position="350"/>
    </location>
</feature>
<feature type="mutagenesis site" description="Strongly reduces affinity for cognate DNA. Strongly reduces transcription termination." evidence="5">
    <original>R</original>
    <variation>A</variation>
    <location>
        <position position="387"/>
    </location>
</feature>
<feature type="helix" evidence="8">
    <location>
        <begin position="75"/>
        <end position="82"/>
    </location>
</feature>
<feature type="helix" evidence="8">
    <location>
        <begin position="86"/>
        <end position="92"/>
    </location>
</feature>
<feature type="helix" evidence="8">
    <location>
        <begin position="94"/>
        <end position="98"/>
    </location>
</feature>
<feature type="helix" evidence="8">
    <location>
        <begin position="104"/>
        <end position="113"/>
    </location>
</feature>
<feature type="helix" evidence="8">
    <location>
        <begin position="118"/>
        <end position="127"/>
    </location>
</feature>
<feature type="helix" evidence="8">
    <location>
        <begin position="129"/>
        <end position="133"/>
    </location>
</feature>
<feature type="helix" evidence="8">
    <location>
        <begin position="136"/>
        <end position="146"/>
    </location>
</feature>
<feature type="turn" evidence="8">
    <location>
        <begin position="147"/>
        <end position="149"/>
    </location>
</feature>
<feature type="helix" evidence="8">
    <location>
        <begin position="153"/>
        <end position="162"/>
    </location>
</feature>
<feature type="helix" evidence="8">
    <location>
        <begin position="165"/>
        <end position="168"/>
    </location>
</feature>
<feature type="helix" evidence="8">
    <location>
        <begin position="173"/>
        <end position="185"/>
    </location>
</feature>
<feature type="helix" evidence="8">
    <location>
        <begin position="190"/>
        <end position="199"/>
    </location>
</feature>
<feature type="helix" evidence="8">
    <location>
        <begin position="201"/>
        <end position="204"/>
    </location>
</feature>
<feature type="helix" evidence="8">
    <location>
        <begin position="208"/>
        <end position="224"/>
    </location>
</feature>
<feature type="helix" evidence="8">
    <location>
        <begin position="230"/>
        <end position="240"/>
    </location>
</feature>
<feature type="helix" evidence="8">
    <location>
        <begin position="242"/>
        <end position="246"/>
    </location>
</feature>
<feature type="helix" evidence="8">
    <location>
        <begin position="249"/>
        <end position="262"/>
    </location>
</feature>
<feature type="helix" evidence="8">
    <location>
        <begin position="267"/>
        <end position="275"/>
    </location>
</feature>
<feature type="turn" evidence="8">
    <location>
        <begin position="276"/>
        <end position="278"/>
    </location>
</feature>
<feature type="helix" evidence="8">
    <location>
        <begin position="279"/>
        <end position="283"/>
    </location>
</feature>
<feature type="helix" evidence="8">
    <location>
        <begin position="288"/>
        <end position="301"/>
    </location>
</feature>
<feature type="turn" evidence="8">
    <location>
        <begin position="302"/>
        <end position="304"/>
    </location>
</feature>
<feature type="helix" evidence="8">
    <location>
        <begin position="307"/>
        <end position="315"/>
    </location>
</feature>
<feature type="helix" evidence="8">
    <location>
        <begin position="318"/>
        <end position="322"/>
    </location>
</feature>
<feature type="helix" evidence="8">
    <location>
        <begin position="325"/>
        <end position="336"/>
    </location>
</feature>
<feature type="turn" evidence="8">
    <location>
        <begin position="337"/>
        <end position="339"/>
    </location>
</feature>
<feature type="helix" evidence="8">
    <location>
        <begin position="342"/>
        <end position="347"/>
    </location>
</feature>
<feature type="helix" evidence="8">
    <location>
        <begin position="349"/>
        <end position="353"/>
    </location>
</feature>
<feature type="helix" evidence="8">
    <location>
        <begin position="356"/>
        <end position="367"/>
    </location>
</feature>
<feature type="turn" evidence="8">
    <location>
        <begin position="368"/>
        <end position="370"/>
    </location>
</feature>
<feature type="strand" evidence="8">
    <location>
        <begin position="373"/>
        <end position="376"/>
    </location>
</feature>
<feature type="helix" evidence="8">
    <location>
        <begin position="378"/>
        <end position="382"/>
    </location>
</feature>
<feature type="helix" evidence="8">
    <location>
        <begin position="385"/>
        <end position="394"/>
    </location>
</feature>
<keyword id="KW-0002">3D-structure</keyword>
<keyword id="KW-0903">Direct protein sequencing</keyword>
<keyword id="KW-0238">DNA-binding</keyword>
<keyword id="KW-0496">Mitochondrion</keyword>
<keyword id="KW-0597">Phosphoprotein</keyword>
<keyword id="KW-1267">Proteomics identification</keyword>
<keyword id="KW-1185">Reference proteome</keyword>
<keyword id="KW-0677">Repeat</keyword>
<keyword id="KW-0804">Transcription</keyword>
<keyword id="KW-0805">Transcription regulation</keyword>
<keyword id="KW-0806">Transcription termination</keyword>
<keyword id="KW-0809">Transit peptide</keyword>
<evidence type="ECO:0000255" key="1"/>
<evidence type="ECO:0000269" key="2">
    <source>
    </source>
</evidence>
<evidence type="ECO:0000269" key="3">
    <source>
    </source>
</evidence>
<evidence type="ECO:0000269" key="4">
    <source>
    </source>
</evidence>
<evidence type="ECO:0000269" key="5">
    <source>
    </source>
</evidence>
<evidence type="ECO:0000269" key="6">
    <source ref="4"/>
</evidence>
<evidence type="ECO:0000305" key="7"/>
<evidence type="ECO:0007829" key="8">
    <source>
        <dbReference type="PDB" id="3MVA"/>
    </source>
</evidence>